<accession>Q3V4T1</accession>
<dbReference type="EMBL" id="AJ888457">
    <property type="protein sequence ID" value="CAI59883.1"/>
    <property type="molecule type" value="Genomic_DNA"/>
</dbReference>
<dbReference type="RefSeq" id="YP_319838.1">
    <property type="nucleotide sequence ID" value="NC_007409.1"/>
</dbReference>
<dbReference type="SMR" id="Q3V4T1"/>
<dbReference type="GeneID" id="4484285"/>
<dbReference type="KEGG" id="vg:4484285"/>
<dbReference type="Proteomes" id="UP000002150">
    <property type="component" value="Genome"/>
</dbReference>
<dbReference type="Gene3D" id="1.10.10.1470">
    <property type="entry name" value="F-112 protein-like"/>
    <property type="match status" value="1"/>
</dbReference>
<dbReference type="InterPro" id="IPR044877">
    <property type="entry name" value="F-112-like_sf"/>
</dbReference>
<dbReference type="InterPro" id="IPR018601">
    <property type="entry name" value="SSV1_F112-like"/>
</dbReference>
<dbReference type="InterPro" id="IPR036390">
    <property type="entry name" value="WH_DNA-bd_sf"/>
</dbReference>
<dbReference type="Pfam" id="PF09645">
    <property type="entry name" value="F-112"/>
    <property type="match status" value="1"/>
</dbReference>
<dbReference type="SUPFAM" id="SSF46785">
    <property type="entry name" value="Winged helix' DNA-binding domain"/>
    <property type="match status" value="1"/>
</dbReference>
<protein>
    <recommendedName>
        <fullName>Uncharacterized protein ORF70</fullName>
    </recommendedName>
</protein>
<name>Y070_ATV</name>
<feature type="chain" id="PRO_0000389039" description="Uncharacterized protein ORF70">
    <location>
        <begin position="1"/>
        <end position="70"/>
    </location>
</feature>
<organismHost>
    <name type="scientific">Acidianus convivator</name>
    <dbReference type="NCBI Taxonomy" id="269667"/>
</organismHost>
<proteinExistence type="predicted"/>
<reference key="1">
    <citation type="journal article" date="2005" name="Nature">
        <title>Virology: independent virus development outside a host.</title>
        <authorList>
            <person name="Haring M."/>
            <person name="Vestergaard G."/>
            <person name="Rachel R."/>
            <person name="Chen L."/>
            <person name="Garrett R.A."/>
            <person name="Prangishvili D."/>
        </authorList>
    </citation>
    <scope>NUCLEOTIDE SEQUENCE [GENOMIC DNA]</scope>
</reference>
<sequence>MQSVNEVAQQLFSKLREKKEITAEDIIAIYNVTPSVAYAIFTVLKVMCQQHQGECQAIKRGRKTVIVSKQ</sequence>
<organism>
    <name type="scientific">Acidianus two-tailed virus</name>
    <name type="common">ATV</name>
    <dbReference type="NCBI Taxonomy" id="315953"/>
    <lineage>
        <taxon>Viruses</taxon>
        <taxon>Viruses incertae sedis</taxon>
        <taxon>Bicaudaviridae</taxon>
        <taxon>Bicaudavirus</taxon>
    </lineage>
</organism>
<keyword id="KW-1185">Reference proteome</keyword>